<reference key="1">
    <citation type="journal article" date="2007" name="Proc. Natl. Acad. Sci. U.S.A.">
        <title>Genome and proteome of long-chain alkane degrading Geobacillus thermodenitrificans NG80-2 isolated from a deep-subsurface oil reservoir.</title>
        <authorList>
            <person name="Feng L."/>
            <person name="Wang W."/>
            <person name="Cheng J."/>
            <person name="Ren Y."/>
            <person name="Zhao G."/>
            <person name="Gao C."/>
            <person name="Tang Y."/>
            <person name="Liu X."/>
            <person name="Han W."/>
            <person name="Peng X."/>
            <person name="Liu R."/>
            <person name="Wang L."/>
        </authorList>
    </citation>
    <scope>NUCLEOTIDE SEQUENCE [LARGE SCALE GENOMIC DNA]</scope>
    <source>
        <strain>NG80-2</strain>
    </source>
</reference>
<sequence length="95" mass="11125">MKDPRDIIKRPIITENTMNLVGQRKYTFEVDVKANKTEVKDAVEKIFGVKVEKVNIMNYKGKFKRVGRYSGYTNRRRKAIVTLTPDSKEIELFEV</sequence>
<dbReference type="EMBL" id="CP000557">
    <property type="protein sequence ID" value="ABO65495.1"/>
    <property type="molecule type" value="Genomic_DNA"/>
</dbReference>
<dbReference type="RefSeq" id="WP_008881942.1">
    <property type="nucleotide sequence ID" value="NC_009328.1"/>
</dbReference>
<dbReference type="SMR" id="A4IJJ1"/>
<dbReference type="GeneID" id="87622324"/>
<dbReference type="KEGG" id="gtn:GTNG_0108"/>
<dbReference type="eggNOG" id="COG0089">
    <property type="taxonomic scope" value="Bacteria"/>
</dbReference>
<dbReference type="HOGENOM" id="CLU_037562_3_2_9"/>
<dbReference type="Proteomes" id="UP000001578">
    <property type="component" value="Chromosome"/>
</dbReference>
<dbReference type="GO" id="GO:1990904">
    <property type="term" value="C:ribonucleoprotein complex"/>
    <property type="evidence" value="ECO:0007669"/>
    <property type="project" value="UniProtKB-KW"/>
</dbReference>
<dbReference type="GO" id="GO:0005840">
    <property type="term" value="C:ribosome"/>
    <property type="evidence" value="ECO:0007669"/>
    <property type="project" value="UniProtKB-KW"/>
</dbReference>
<dbReference type="GO" id="GO:0019843">
    <property type="term" value="F:rRNA binding"/>
    <property type="evidence" value="ECO:0007669"/>
    <property type="project" value="UniProtKB-UniRule"/>
</dbReference>
<dbReference type="GO" id="GO:0003735">
    <property type="term" value="F:structural constituent of ribosome"/>
    <property type="evidence" value="ECO:0007669"/>
    <property type="project" value="InterPro"/>
</dbReference>
<dbReference type="GO" id="GO:0006412">
    <property type="term" value="P:translation"/>
    <property type="evidence" value="ECO:0007669"/>
    <property type="project" value="UniProtKB-UniRule"/>
</dbReference>
<dbReference type="FunFam" id="3.30.70.330:FF:000001">
    <property type="entry name" value="50S ribosomal protein L23"/>
    <property type="match status" value="1"/>
</dbReference>
<dbReference type="Gene3D" id="3.30.70.330">
    <property type="match status" value="1"/>
</dbReference>
<dbReference type="HAMAP" id="MF_01369_B">
    <property type="entry name" value="Ribosomal_uL23_B"/>
    <property type="match status" value="1"/>
</dbReference>
<dbReference type="InterPro" id="IPR012677">
    <property type="entry name" value="Nucleotide-bd_a/b_plait_sf"/>
</dbReference>
<dbReference type="InterPro" id="IPR013025">
    <property type="entry name" value="Ribosomal_uL23-like"/>
</dbReference>
<dbReference type="InterPro" id="IPR012678">
    <property type="entry name" value="Ribosomal_uL23/eL15/eS24_sf"/>
</dbReference>
<dbReference type="InterPro" id="IPR001014">
    <property type="entry name" value="Ribosomal_uL23_CS"/>
</dbReference>
<dbReference type="NCBIfam" id="NF004363">
    <property type="entry name" value="PRK05738.2-4"/>
    <property type="match status" value="1"/>
</dbReference>
<dbReference type="PANTHER" id="PTHR11620">
    <property type="entry name" value="60S RIBOSOMAL PROTEIN L23A"/>
    <property type="match status" value="1"/>
</dbReference>
<dbReference type="Pfam" id="PF00276">
    <property type="entry name" value="Ribosomal_L23"/>
    <property type="match status" value="1"/>
</dbReference>
<dbReference type="SUPFAM" id="SSF54189">
    <property type="entry name" value="Ribosomal proteins S24e, L23 and L15e"/>
    <property type="match status" value="1"/>
</dbReference>
<dbReference type="PROSITE" id="PS00050">
    <property type="entry name" value="RIBOSOMAL_L23"/>
    <property type="match status" value="1"/>
</dbReference>
<evidence type="ECO:0000255" key="1">
    <source>
        <dbReference type="HAMAP-Rule" id="MF_01369"/>
    </source>
</evidence>
<evidence type="ECO:0000305" key="2"/>
<gene>
    <name evidence="1" type="primary">rplW</name>
    <name type="ordered locus">GTNG_0108</name>
</gene>
<comment type="function">
    <text evidence="1">One of the early assembly proteins it binds 23S rRNA. One of the proteins that surrounds the polypeptide exit tunnel on the outside of the ribosome. Forms the main docking site for trigger factor binding to the ribosome.</text>
</comment>
<comment type="subunit">
    <text evidence="1">Part of the 50S ribosomal subunit. Contacts protein L29, and trigger factor when it is bound to the ribosome.</text>
</comment>
<comment type="similarity">
    <text evidence="1">Belongs to the universal ribosomal protein uL23 family.</text>
</comment>
<proteinExistence type="inferred from homology"/>
<organism>
    <name type="scientific">Geobacillus thermodenitrificans (strain NG80-2)</name>
    <dbReference type="NCBI Taxonomy" id="420246"/>
    <lineage>
        <taxon>Bacteria</taxon>
        <taxon>Bacillati</taxon>
        <taxon>Bacillota</taxon>
        <taxon>Bacilli</taxon>
        <taxon>Bacillales</taxon>
        <taxon>Anoxybacillaceae</taxon>
        <taxon>Geobacillus</taxon>
    </lineage>
</organism>
<accession>A4IJJ1</accession>
<protein>
    <recommendedName>
        <fullName evidence="1">Large ribosomal subunit protein uL23</fullName>
    </recommendedName>
    <alternativeName>
        <fullName evidence="2">50S ribosomal protein L23</fullName>
    </alternativeName>
</protein>
<name>RL23_GEOTN</name>
<feature type="chain" id="PRO_1000068082" description="Large ribosomal subunit protein uL23">
    <location>
        <begin position="1"/>
        <end position="95"/>
    </location>
</feature>
<keyword id="KW-0687">Ribonucleoprotein</keyword>
<keyword id="KW-0689">Ribosomal protein</keyword>
<keyword id="KW-0694">RNA-binding</keyword>
<keyword id="KW-0699">rRNA-binding</keyword>